<evidence type="ECO:0000255" key="1"/>
<evidence type="ECO:0000269" key="2">
    <source>
    </source>
</evidence>
<evidence type="ECO:0000269" key="3">
    <source>
    </source>
</evidence>
<evidence type="ECO:0000269" key="4">
    <source>
    </source>
</evidence>
<evidence type="ECO:0000269" key="5">
    <source>
    </source>
</evidence>
<evidence type="ECO:0000269" key="6">
    <source>
    </source>
</evidence>
<evidence type="ECO:0000269" key="7">
    <source>
    </source>
</evidence>
<evidence type="ECO:0000269" key="8">
    <source>
    </source>
</evidence>
<evidence type="ECO:0000269" key="9">
    <source>
    </source>
</evidence>
<evidence type="ECO:0000269" key="10">
    <source>
    </source>
</evidence>
<evidence type="ECO:0000269" key="11">
    <source>
    </source>
</evidence>
<evidence type="ECO:0000269" key="12">
    <source>
    </source>
</evidence>
<evidence type="ECO:0000305" key="13"/>
<evidence type="ECO:0000305" key="14">
    <source>
    </source>
</evidence>
<evidence type="ECO:0000312" key="15">
    <source>
        <dbReference type="EMBL" id="AAA36276.1"/>
    </source>
</evidence>
<evidence type="ECO:0000312" key="16">
    <source>
        <dbReference type="EMBL" id="AAA59791.1"/>
    </source>
</evidence>
<evidence type="ECO:0000312" key="17">
    <source>
        <dbReference type="EMBL" id="AAA59818.1"/>
    </source>
</evidence>
<evidence type="ECO:0000312" key="18">
    <source>
        <dbReference type="EMBL" id="AAA59822.1"/>
    </source>
</evidence>
<evidence type="ECO:0000312" key="19">
    <source>
        <dbReference type="EMBL" id="AAH09234.1"/>
    </source>
</evidence>
<evidence type="ECO:0000312" key="20">
    <source>
        <dbReference type="EMBL" id="CAI18079.1"/>
    </source>
</evidence>
<evidence type="ECO:0000312" key="21">
    <source>
        <dbReference type="PDB" id="1H15"/>
    </source>
</evidence>
<evidence type="ECO:0000312" key="22">
    <source>
        <dbReference type="PIR" id="B28756"/>
    </source>
</evidence>
<evidence type="ECO:0000312" key="23">
    <source>
        <dbReference type="PIR" id="C32526"/>
    </source>
</evidence>
<evidence type="ECO:0000312" key="24">
    <source>
        <dbReference type="PIR" id="D25239"/>
    </source>
</evidence>
<evidence type="ECO:0007829" key="25">
    <source>
        <dbReference type="PDB" id="1FV1"/>
    </source>
</evidence>
<proteinExistence type="evidence at protein level"/>
<accession>Q30154</accession>
<accession>B2RBV6</accession>
<accession>C7C4X3</accession>
<accession>O00157</accession>
<accession>O00283</accession>
<accession>O46700</accession>
<accession>Q29703</accession>
<accession>Q29787</accession>
<accession>Q29788</accession>
<accession>Q30126</accession>
<accession>Q30150</accession>
<accession>Q30199</accession>
<accession>Q6SJR2</accession>
<accession>Q7M2H9</accession>
<accession>Q8HWS7</accession>
<accession>Q8WLR5</accession>
<accession>Q9MY54</accession>
<accession>Q9XRX6</accession>
<organism>
    <name type="scientific">Homo sapiens</name>
    <name type="common">Human</name>
    <dbReference type="NCBI Taxonomy" id="9606"/>
    <lineage>
        <taxon>Eukaryota</taxon>
        <taxon>Metazoa</taxon>
        <taxon>Chordata</taxon>
        <taxon>Craniata</taxon>
        <taxon>Vertebrata</taxon>
        <taxon>Euteleostomi</taxon>
        <taxon>Mammalia</taxon>
        <taxon>Eutheria</taxon>
        <taxon>Euarchontoglires</taxon>
        <taxon>Primates</taxon>
        <taxon>Haplorrhini</taxon>
        <taxon>Catarrhini</taxon>
        <taxon>Hominidae</taxon>
        <taxon>Homo</taxon>
    </lineage>
</organism>
<reference evidence="13 24" key="1">
    <citation type="journal article" date="1986" name="Nature">
        <title>Polymorphism of human Ia antigens generated by reciprocal intergenic exchange between two DR beta loci.</title>
        <authorList>
            <person name="Wu S."/>
            <person name="Saunders T.L."/>
            <person name="Bach F.H."/>
        </authorList>
    </citation>
    <scope>NUCLEOTIDE SEQUENCE [MRNA]</scope>
    <scope>VARIANTS SER-28 AND ALA-154</scope>
</reference>
<reference evidence="13 23" key="2">
    <citation type="journal article" date="1987" name="J. Immunol.">
        <title>cDNA cloning and sequencing reveals that the electrophoretically constant DR beta 2 molecules, as well as the variable DR beta 1 molecules, from HLA-DR2 subtypes have different amino acid sequences including a hypervariable region for a functionally important epitope.</title>
        <authorList>
            <person name="Wu S.K."/>
            <person name="Yabe T."/>
            <person name="Madden M."/>
            <person name="Saunders T.L."/>
            <person name="Bach F.H."/>
        </authorList>
    </citation>
    <scope>NUCLEOTIDE SEQUENCE [MRNA]</scope>
    <scope>VARIANT SER-28</scope>
</reference>
<reference evidence="18" key="3">
    <citation type="journal article" date="1988" name="Immunogenetics">
        <title>MHC class II sequences of an HLA-DR2 narcoleptic.</title>
        <authorList>
            <person name="Lock C.B."/>
            <person name="So A.K."/>
            <person name="Welsh K.I."/>
            <person name="Parkes J.D."/>
            <person name="Trowsdale J."/>
        </authorList>
    </citation>
    <scope>NUCLEOTIDE SEQUENCE [MRNA] (ALLELE DRB5*01:01)</scope>
</reference>
<reference evidence="13 16" key="4">
    <citation type="journal article" date="1991" name="Hum. Immunol.">
        <title>A novel DRB1 allele in DR2-positive American blacks.</title>
        <authorList>
            <person name="Demopulos J.T."/>
            <person name="Hodge T.W."/>
            <person name="Wooten V."/>
            <person name="Acton R.T."/>
        </authorList>
    </citation>
    <scope>NUCLEOTIDE SEQUENCE [MRNA]</scope>
    <scope>VARIANT SER-28</scope>
</reference>
<reference key="5">
    <citation type="journal article" date="2004" name="Nat. Genet.">
        <title>Complete sequencing and characterization of 21,243 full-length human cDNAs.</title>
        <authorList>
            <person name="Ota T."/>
            <person name="Suzuki Y."/>
            <person name="Nishikawa T."/>
            <person name="Otsuki T."/>
            <person name="Sugiyama T."/>
            <person name="Irie R."/>
            <person name="Wakamatsu A."/>
            <person name="Hayashi K."/>
            <person name="Sato H."/>
            <person name="Nagai K."/>
            <person name="Kimura K."/>
            <person name="Makita H."/>
            <person name="Sekine M."/>
            <person name="Obayashi M."/>
            <person name="Nishi T."/>
            <person name="Shibahara T."/>
            <person name="Tanaka T."/>
            <person name="Ishii S."/>
            <person name="Yamamoto J."/>
            <person name="Saito K."/>
            <person name="Kawai Y."/>
            <person name="Isono Y."/>
            <person name="Nakamura Y."/>
            <person name="Nagahari K."/>
            <person name="Murakami K."/>
            <person name="Yasuda T."/>
            <person name="Iwayanagi T."/>
            <person name="Wagatsuma M."/>
            <person name="Shiratori A."/>
            <person name="Sudo H."/>
            <person name="Hosoiri T."/>
            <person name="Kaku Y."/>
            <person name="Kodaira H."/>
            <person name="Kondo H."/>
            <person name="Sugawara M."/>
            <person name="Takahashi M."/>
            <person name="Kanda K."/>
            <person name="Yokoi T."/>
            <person name="Furuya T."/>
            <person name="Kikkawa E."/>
            <person name="Omura Y."/>
            <person name="Abe K."/>
            <person name="Kamihara K."/>
            <person name="Katsuta N."/>
            <person name="Sato K."/>
            <person name="Tanikawa M."/>
            <person name="Yamazaki M."/>
            <person name="Ninomiya K."/>
            <person name="Ishibashi T."/>
            <person name="Yamashita H."/>
            <person name="Murakawa K."/>
            <person name="Fujimori K."/>
            <person name="Tanai H."/>
            <person name="Kimata M."/>
            <person name="Watanabe M."/>
            <person name="Hiraoka S."/>
            <person name="Chiba Y."/>
            <person name="Ishida S."/>
            <person name="Ono Y."/>
            <person name="Takiguchi S."/>
            <person name="Watanabe S."/>
            <person name="Yosida M."/>
            <person name="Hotuta T."/>
            <person name="Kusano J."/>
            <person name="Kanehori K."/>
            <person name="Takahashi-Fujii A."/>
            <person name="Hara H."/>
            <person name="Tanase T.-O."/>
            <person name="Nomura Y."/>
            <person name="Togiya S."/>
            <person name="Komai F."/>
            <person name="Hara R."/>
            <person name="Takeuchi K."/>
            <person name="Arita M."/>
            <person name="Imose N."/>
            <person name="Musashino K."/>
            <person name="Yuuki H."/>
            <person name="Oshima A."/>
            <person name="Sasaki N."/>
            <person name="Aotsuka S."/>
            <person name="Yoshikawa Y."/>
            <person name="Matsunawa H."/>
            <person name="Ichihara T."/>
            <person name="Shiohata N."/>
            <person name="Sano S."/>
            <person name="Moriya S."/>
            <person name="Momiyama H."/>
            <person name="Satoh N."/>
            <person name="Takami S."/>
            <person name="Terashima Y."/>
            <person name="Suzuki O."/>
            <person name="Nakagawa S."/>
            <person name="Senoh A."/>
            <person name="Mizoguchi H."/>
            <person name="Goto Y."/>
            <person name="Shimizu F."/>
            <person name="Wakebe H."/>
            <person name="Hishigaki H."/>
            <person name="Watanabe T."/>
            <person name="Sugiyama A."/>
            <person name="Takemoto M."/>
            <person name="Kawakami B."/>
            <person name="Yamazaki M."/>
            <person name="Watanabe K."/>
            <person name="Kumagai A."/>
            <person name="Itakura S."/>
            <person name="Fukuzumi Y."/>
            <person name="Fujimori Y."/>
            <person name="Komiyama M."/>
            <person name="Tashiro H."/>
            <person name="Tanigami A."/>
            <person name="Fujiwara T."/>
            <person name="Ono T."/>
            <person name="Yamada K."/>
            <person name="Fujii Y."/>
            <person name="Ozaki K."/>
            <person name="Hirao M."/>
            <person name="Ohmori Y."/>
            <person name="Kawabata A."/>
            <person name="Hikiji T."/>
            <person name="Kobatake N."/>
            <person name="Inagaki H."/>
            <person name="Ikema Y."/>
            <person name="Okamoto S."/>
            <person name="Okitani R."/>
            <person name="Kawakami T."/>
            <person name="Noguchi S."/>
            <person name="Itoh T."/>
            <person name="Shigeta K."/>
            <person name="Senba T."/>
            <person name="Matsumura K."/>
            <person name="Nakajima Y."/>
            <person name="Mizuno T."/>
            <person name="Morinaga M."/>
            <person name="Sasaki M."/>
            <person name="Togashi T."/>
            <person name="Oyama M."/>
            <person name="Hata H."/>
            <person name="Watanabe M."/>
            <person name="Komatsu T."/>
            <person name="Mizushima-Sugano J."/>
            <person name="Satoh T."/>
            <person name="Shirai Y."/>
            <person name="Takahashi Y."/>
            <person name="Nakagawa K."/>
            <person name="Okumura K."/>
            <person name="Nagase T."/>
            <person name="Nomura N."/>
            <person name="Kikuchi H."/>
            <person name="Masuho Y."/>
            <person name="Yamashita R."/>
            <person name="Nakai K."/>
            <person name="Yada T."/>
            <person name="Nakamura Y."/>
            <person name="Ohara O."/>
            <person name="Isogai T."/>
            <person name="Sugano S."/>
        </authorList>
    </citation>
    <scope>NUCLEOTIDE SEQUENCE [LARGE SCALE MRNA] (ALLELE DRB5*01:01)</scope>
    <source>
        <tissue>Stomach</tissue>
    </source>
</reference>
<reference evidence="13 20" key="6">
    <citation type="journal article" date="2003" name="Nature">
        <title>The DNA sequence and analysis of human chromosome 6.</title>
        <authorList>
            <person name="Mungall A.J."/>
            <person name="Palmer S.A."/>
            <person name="Sims S.K."/>
            <person name="Edwards C.A."/>
            <person name="Ashurst J.L."/>
            <person name="Wilming L."/>
            <person name="Jones M.C."/>
            <person name="Horton R."/>
            <person name="Hunt S.E."/>
            <person name="Scott C.E."/>
            <person name="Gilbert J.G.R."/>
            <person name="Clamp M.E."/>
            <person name="Bethel G."/>
            <person name="Milne S."/>
            <person name="Ainscough R."/>
            <person name="Almeida J.P."/>
            <person name="Ambrose K.D."/>
            <person name="Andrews T.D."/>
            <person name="Ashwell R.I.S."/>
            <person name="Babbage A.K."/>
            <person name="Bagguley C.L."/>
            <person name="Bailey J."/>
            <person name="Banerjee R."/>
            <person name="Barker D.J."/>
            <person name="Barlow K.F."/>
            <person name="Bates K."/>
            <person name="Beare D.M."/>
            <person name="Beasley H."/>
            <person name="Beasley O."/>
            <person name="Bird C.P."/>
            <person name="Blakey S.E."/>
            <person name="Bray-Allen S."/>
            <person name="Brook J."/>
            <person name="Brown A.J."/>
            <person name="Brown J.Y."/>
            <person name="Burford D.C."/>
            <person name="Burrill W."/>
            <person name="Burton J."/>
            <person name="Carder C."/>
            <person name="Carter N.P."/>
            <person name="Chapman J.C."/>
            <person name="Clark S.Y."/>
            <person name="Clark G."/>
            <person name="Clee C.M."/>
            <person name="Clegg S."/>
            <person name="Cobley V."/>
            <person name="Collier R.E."/>
            <person name="Collins J.E."/>
            <person name="Colman L.K."/>
            <person name="Corby N.R."/>
            <person name="Coville G.J."/>
            <person name="Culley K.M."/>
            <person name="Dhami P."/>
            <person name="Davies J."/>
            <person name="Dunn M."/>
            <person name="Earthrowl M.E."/>
            <person name="Ellington A.E."/>
            <person name="Evans K.A."/>
            <person name="Faulkner L."/>
            <person name="Francis M.D."/>
            <person name="Frankish A."/>
            <person name="Frankland J."/>
            <person name="French L."/>
            <person name="Garner P."/>
            <person name="Garnett J."/>
            <person name="Ghori M.J."/>
            <person name="Gilby L.M."/>
            <person name="Gillson C.J."/>
            <person name="Glithero R.J."/>
            <person name="Grafham D.V."/>
            <person name="Grant M."/>
            <person name="Gribble S."/>
            <person name="Griffiths C."/>
            <person name="Griffiths M.N.D."/>
            <person name="Hall R."/>
            <person name="Halls K.S."/>
            <person name="Hammond S."/>
            <person name="Harley J.L."/>
            <person name="Hart E.A."/>
            <person name="Heath P.D."/>
            <person name="Heathcott R."/>
            <person name="Holmes S.J."/>
            <person name="Howden P.J."/>
            <person name="Howe K.L."/>
            <person name="Howell G.R."/>
            <person name="Huckle E."/>
            <person name="Humphray S.J."/>
            <person name="Humphries M.D."/>
            <person name="Hunt A.R."/>
            <person name="Johnson C.M."/>
            <person name="Joy A.A."/>
            <person name="Kay M."/>
            <person name="Keenan S.J."/>
            <person name="Kimberley A.M."/>
            <person name="King A."/>
            <person name="Laird G.K."/>
            <person name="Langford C."/>
            <person name="Lawlor S."/>
            <person name="Leongamornlert D.A."/>
            <person name="Leversha M."/>
            <person name="Lloyd C.R."/>
            <person name="Lloyd D.M."/>
            <person name="Loveland J.E."/>
            <person name="Lovell J."/>
            <person name="Martin S."/>
            <person name="Mashreghi-Mohammadi M."/>
            <person name="Maslen G.L."/>
            <person name="Matthews L."/>
            <person name="McCann O.T."/>
            <person name="McLaren S.J."/>
            <person name="McLay K."/>
            <person name="McMurray A."/>
            <person name="Moore M.J.F."/>
            <person name="Mullikin J.C."/>
            <person name="Niblett D."/>
            <person name="Nickerson T."/>
            <person name="Novik K.L."/>
            <person name="Oliver K."/>
            <person name="Overton-Larty E.K."/>
            <person name="Parker A."/>
            <person name="Patel R."/>
            <person name="Pearce A.V."/>
            <person name="Peck A.I."/>
            <person name="Phillimore B.J.C.T."/>
            <person name="Phillips S."/>
            <person name="Plumb R.W."/>
            <person name="Porter K.M."/>
            <person name="Ramsey Y."/>
            <person name="Ranby S.A."/>
            <person name="Rice C.M."/>
            <person name="Ross M.T."/>
            <person name="Searle S.M."/>
            <person name="Sehra H.K."/>
            <person name="Sheridan E."/>
            <person name="Skuce C.D."/>
            <person name="Smith S."/>
            <person name="Smith M."/>
            <person name="Spraggon L."/>
            <person name="Squares S.L."/>
            <person name="Steward C.A."/>
            <person name="Sycamore N."/>
            <person name="Tamlyn-Hall G."/>
            <person name="Tester J."/>
            <person name="Theaker A.J."/>
            <person name="Thomas D.W."/>
            <person name="Thorpe A."/>
            <person name="Tracey A."/>
            <person name="Tromans A."/>
            <person name="Tubby B."/>
            <person name="Wall M."/>
            <person name="Wallis J.M."/>
            <person name="West A.P."/>
            <person name="White S.S."/>
            <person name="Whitehead S.L."/>
            <person name="Whittaker H."/>
            <person name="Wild A."/>
            <person name="Willey D.J."/>
            <person name="Wilmer T.E."/>
            <person name="Wood J.M."/>
            <person name="Wray P.W."/>
            <person name="Wyatt J.C."/>
            <person name="Young L."/>
            <person name="Younger R.M."/>
            <person name="Bentley D.R."/>
            <person name="Coulson A."/>
            <person name="Durbin R.M."/>
            <person name="Hubbard T."/>
            <person name="Sulston J.E."/>
            <person name="Dunham I."/>
            <person name="Rogers J."/>
            <person name="Beck S."/>
        </authorList>
    </citation>
    <scope>NUCLEOTIDE SEQUENCE [LARGE SCALE GENOMIC DNA] (ALLELE DRB5*01:01)</scope>
</reference>
<reference evidence="13 19" key="7">
    <citation type="journal article" date="2004" name="Genome Res.">
        <title>The status, quality, and expansion of the NIH full-length cDNA project: the Mammalian Gene Collection (MGC).</title>
        <authorList>
            <consortium name="The MGC Project Team"/>
        </authorList>
    </citation>
    <scope>NUCLEOTIDE SEQUENCE [LARGE SCALE MRNA] (ALLELE DRB5*01:01)</scope>
    <source>
        <tissue evidence="19">B-cell</tissue>
    </source>
</reference>
<reference key="8">
    <citation type="journal article" date="1997" name="Immunogenetics">
        <title>Diversity associated with the second expressed HLA-DRB locus in the human population.</title>
        <authorList>
            <person name="Robbins F."/>
            <person name="Hurley C.K."/>
            <person name="Tang T."/>
            <person name="Yao H."/>
            <person name="Lin Y.S."/>
            <person name="Wade J."/>
            <person name="Goeken N."/>
            <person name="Hartzman R.J."/>
        </authorList>
    </citation>
    <scope>NUCLEOTIDE SEQUENCE [MRNA] OF 28-140 (ALLELE DRB5*01:04)</scope>
    <scope>NUCLEOTIDE SEQUENCE [GENOMIC DNA] OF 35-119 (ALLELE DRB5*02:04)</scope>
    <source>
        <tissue>Blood</tissue>
    </source>
</reference>
<reference evidence="15" key="9">
    <citation type="journal article" date="1987" name="Proc. Natl. Acad. Sci. U.S.A.">
        <title>HLA-DR2 subtypes form an additional supertypic family of DR beta alleles.</title>
        <authorList>
            <person name="Lee B.S.M."/>
            <person name="Rust N.A."/>
            <person name="McMichael A.J."/>
            <person name="McDevitt H.O."/>
        </authorList>
    </citation>
    <scope>NUCLEOTIDE SEQUENCE [MRNA] OF 30-266 (ALLELES DRB5*01:01 AND DRB5*01:02)</scope>
</reference>
<reference evidence="13 17" key="10">
    <citation type="journal article" date="1987" name="Proc. Natl. Acad. Sci. U.S.A.">
        <title>Allelic variation in the DR subregion of the human major histocompatibility complex.</title>
        <authorList>
            <person name="Bell J.I."/>
            <person name="Denney D. Jr."/>
            <person name="Foster L."/>
            <person name="Belt T.K."/>
            <person name="Todd J.A."/>
            <person name="McDevitt H.O."/>
        </authorList>
    </citation>
    <scope>NUCLEOTIDE SEQUENCE [MRNA] OF 30-266</scope>
    <scope>VARIANT ALA-154</scope>
</reference>
<reference evidence="22" key="11">
    <citation type="journal article" date="1983" name="Hoppe-Seyler's Z. Physiol. Chem.">
        <title>Primary structure of human class II histocompatibility antigens 3rd communication. Amino acid sequence comparison between DR and DC subclass antigens derived from a lymphoblastoid B cell line homozygous at the HLA loci (HLA-A3,3; B7,7; Dw2,2; DR2,2: MT1,1; Dc1,1: MB1,1).</title>
        <authorList>
            <person name="Goetz H."/>
            <person name="Kratzin H."/>
            <person name="Thinnes F.P."/>
            <person name="Yang C.-Y."/>
            <person name="Kruse T."/>
            <person name="Pauly E."/>
            <person name="Koelbel S."/>
            <person name="Egert G."/>
            <person name="Wernet P."/>
            <person name="Hilschmann N."/>
        </authorList>
    </citation>
    <scope>PROTEIN SEQUENCE OF 30-148 AND 158-178</scope>
</reference>
<reference key="12">
    <citation type="journal article" date="1996" name="Tissue Antigens">
        <title>Characterization of a new HLA-DRB5 allele (DRB5*0105) by PCR-SSP and direct sequencing.</title>
        <authorList>
            <person name="Poli F."/>
            <person name="Bianchi P."/>
            <person name="Crespiatico L."/>
            <person name="Terragna C."/>
            <person name="van den Berg-Loonen E."/>
            <person name="Sirchia G."/>
        </authorList>
    </citation>
    <scope>NUCLEOTIDE SEQUENCE [GENOMIC DNA] OF 34-122 (ALLELE DRB5*01:05)</scope>
</reference>
<reference key="13">
    <citation type="submission" date="2009-07" db="EMBL/GenBank/DDBJ databases">
        <title>New sequences found during routine HLA typing.</title>
        <authorList>
            <person name="Anholts J.D.H."/>
        </authorList>
    </citation>
    <scope>NUCLEOTIDE SEQUENCE [GENOMIC DNA] OF 35-217 (ALLELE DRB5*01:14)</scope>
    <source>
        <tissue>Blood</tissue>
    </source>
</reference>
<reference key="14">
    <citation type="journal article" date="1997" name="Eur. J. Immunogenet.">
        <title>Sequence of a new HLA-DR allele, DRB5*0106.</title>
        <authorList>
            <person name="Kervaire B."/>
            <person name="Tiercy J."/>
        </authorList>
    </citation>
    <scope>NUCLEOTIDE SEQUENCE [GENOMIC DNA] OF 35-123 (ALLELE DRB5*01:06)</scope>
</reference>
<reference key="15">
    <citation type="submission" date="1999-01" db="EMBL/GenBank/DDBJ databases">
        <authorList>
            <person name="Hurley C.K."/>
        </authorList>
    </citation>
    <scope>NUCLEOTIDE SEQUENCE [GENOMIC DNA] OF 35-123 (ALLELE DRB5*01:03)</scope>
    <source>
        <tissue>Blood</tissue>
    </source>
</reference>
<reference key="16">
    <citation type="submission" date="2000-01" db="EMBL/GenBank/DDBJ databases">
        <title>Identification of a new DRB5*02 variant allele by PCR-SSP and SBT.</title>
        <authorList>
            <person name="Carter V."/>
            <person name="Day S."/>
            <person name="Dunn P."/>
        </authorList>
    </citation>
    <scope>NUCLEOTIDE SEQUENCE [GENOMIC DNA] OF 35-123 (ALLELE DRB5*02:05)</scope>
</reference>
<reference key="17">
    <citation type="submission" date="2002-08" db="EMBL/GenBank/DDBJ databases">
        <title>Novel HLA-DRB5 allele found by sequence based typing.</title>
        <authorList>
            <person name="Greville W.D."/>
            <person name="Chapman G."/>
            <person name="Hogbin J.-P."/>
            <person name="Velickovic Z."/>
        </authorList>
    </citation>
    <scope>NUCLEOTIDE SEQUENCE [GENOMIC DNA] OF 35-123 (ALLELE DRB5*01:11)</scope>
</reference>
<reference key="18">
    <citation type="journal article" date="2003" name="Tissue Antigens">
        <title>Identification of a new HLA-DRB5 allele, DRB5*0112, by routine PCR-SSP.</title>
        <authorList>
            <person name="Atkinson D.C."/>
            <person name="Jobson S.E."/>
            <person name="Dunn P.P."/>
            <person name="Briggs D.C."/>
        </authorList>
    </citation>
    <scope>NUCLEOTIDE SEQUENCE [GENOMIC DNA] OF 35-123 (ALLELE DRB5*01:12)</scope>
</reference>
<reference key="19">
    <citation type="journal article" date="2006" name="Tissue Antigens">
        <title>Identification of a new allele, HLA-DRB5*0113, through three different molecular biology techniques.</title>
        <authorList>
            <person name="Garino E."/>
            <person name="Berrino M."/>
            <person name="Bertinetto F."/>
            <person name="Caropreso P."/>
            <person name="Chidichimo R."/>
            <person name="Dametto E."/>
            <person name="Fasano M.E."/>
            <person name="Frisaldi E."/>
            <person name="Mazzola G."/>
            <person name="Tondat F."/>
            <person name="Boccadoro M."/>
            <person name="Bruno B."/>
            <person name="Amoroso A."/>
        </authorList>
    </citation>
    <scope>NUCLEOTIDE SEQUENCE [GENOMIC DNA] OF 35-123 (ALLELE DRB5*01:13)</scope>
</reference>
<reference key="20">
    <citation type="journal article" date="1997" name="Tissue Antigens">
        <title>Identification of novel DRB1*11 (DRB1*11013, DRB1*1129), DRB1*08 (DRB1*0816) and DRB5* (DRB5*0107) alleles.</title>
        <authorList>
            <person name="Buyse I.M."/>
            <person name="Couture C."/>
            <person name="Hashemi-Tavoularis S."/>
        </authorList>
    </citation>
    <scope>NUCLEOTIDE SEQUENCE [GENOMIC DNA] OF 35-115 (ALLELE DRB5*01:07)</scope>
</reference>
<reference key="21">
    <citation type="journal article" date="1998" name="Tissue Antigens">
        <title>Identification of novel DRB1*13 (DRB1*1333), DRB1*04 (DRB1*0426) and DRB5* (DRB5*0109) alleles.</title>
        <authorList>
            <person name="Buyse I.M."/>
            <person name="Ouellet S."/>
            <person name="Hashemi-Tavoularis S."/>
        </authorList>
    </citation>
    <scope>NUCLEOTIDE SEQUENCE [GENOMIC DNA] OF 35-115 (ALLELE DRB5*01:09)</scope>
</reference>
<reference key="22">
    <citation type="journal article" date="1992" name="Tissue Antigens">
        <title>DRB5*HK: a new HLA-DRB5 allele in Cantonese.</title>
        <authorList>
            <person name="Grooms A."/>
            <person name="Dunckley H."/>
            <person name="Gao X."/>
            <person name="Serjeantson S.W."/>
        </authorList>
    </citation>
    <scope>NUCLEOTIDE SEQUENCE [GENOMIC DNA] OF 36-119 (ALLELE DRB5*02:03)</scope>
</reference>
<reference key="23">
    <citation type="journal article" date="1996" name="Cell">
        <title>Invariant chain structure and MHC class II function.</title>
        <authorList>
            <person name="Cresswell P."/>
        </authorList>
    </citation>
    <scope>REVIEW</scope>
</reference>
<reference key="24">
    <citation type="journal article" date="2001" name="Mol. Immunol.">
        <title>Presentation of antigens by MHC class II molecules: getting the most out of them.</title>
        <authorList>
            <person name="Villadangos J.A."/>
        </authorList>
    </citation>
    <scope>REVIEW</scope>
</reference>
<reference key="25">
    <citation type="journal article" date="2007" name="Immunity">
        <title>Autophagy in MHC class II presentation: sampling from within.</title>
        <authorList>
            <person name="Menendez-Benito V."/>
            <person name="Neefjes J."/>
        </authorList>
    </citation>
    <scope>REVIEW</scope>
</reference>
<reference key="26">
    <citation type="journal article" date="2008" name="EMBO J.">
        <title>MHC class II molecules on the move for successful antigen presentation.</title>
        <authorList>
            <person name="Rocha N."/>
            <person name="Neefjes J."/>
        </authorList>
    </citation>
    <scope>REVIEW</scope>
</reference>
<reference key="27">
    <citation type="journal article" date="2008" name="Proc. Natl. Acad. Sci. U.S.A.">
        <title>MHC class II stabilization at the surface of human dendritic cells is the result of maturation-dependent MARCH I down-regulation.</title>
        <authorList>
            <person name="De Gassart A."/>
            <person name="Camosseto V."/>
            <person name="Thibodeau J."/>
            <person name="Ceppi M."/>
            <person name="Catalan N."/>
            <person name="Pierre P."/>
            <person name="Gatti E."/>
        </authorList>
    </citation>
    <scope>UBIQUITINATION BY MARCH1</scope>
    <scope>SUBCELLULAR LOCATION</scope>
</reference>
<reference key="28">
    <citation type="journal article" date="2009" name="J. Cell Sci.">
        <title>MHC class II transport at a glance.</title>
        <authorList>
            <person name="Berger A.C."/>
            <person name="Roche P.A."/>
        </authorList>
    </citation>
    <scope>REVIEW</scope>
</reference>
<reference key="29">
    <citation type="journal article" date="2009" name="World J. Gastroenterol.">
        <title>CD74 in antigen presentation, inflammation, and cancers of the gastrointestinal tract.</title>
        <authorList>
            <person name="Beswick E.J."/>
            <person name="Reyes V.E."/>
        </authorList>
    </citation>
    <scope>REVIEW</scope>
</reference>
<reference key="30">
    <citation type="journal article" date="2009" name="J. Proteome Res.">
        <title>Glycoproteomics analysis of human liver tissue by combination of multiple enzyme digestion and hydrazide chemistry.</title>
        <authorList>
            <person name="Chen R."/>
            <person name="Jiang X."/>
            <person name="Sun D."/>
            <person name="Han G."/>
            <person name="Wang F."/>
            <person name="Ye M."/>
            <person name="Wang L."/>
            <person name="Zou H."/>
        </authorList>
    </citation>
    <scope>GLYCOSYLATION [LARGE SCALE ANALYSIS] AT ASN-48</scope>
    <source>
        <tissue>Liver</tissue>
    </source>
</reference>
<reference key="31">
    <citation type="journal article" date="2011" name="BMC Syst. Biol.">
        <title>Initial characterization of the human central proteome.</title>
        <authorList>
            <person name="Burkard T.R."/>
            <person name="Planyavsky M."/>
            <person name="Kaupe I."/>
            <person name="Breitwieser F.P."/>
            <person name="Buerckstuemmer T."/>
            <person name="Bennett K.L."/>
            <person name="Superti-Furga G."/>
            <person name="Colinge J."/>
        </authorList>
    </citation>
    <scope>IDENTIFICATION BY MASS SPECTROMETRY [LARGE SCALE ANALYSIS]</scope>
</reference>
<reference evidence="13" key="32">
    <citation type="journal article" date="2000" name="J. Mol. Biol.">
        <title>Structural basis for the binding of an immunodominant peptide from myelin basic protein in different registers by two HLA-DR2 proteins.</title>
        <authorList>
            <person name="Li Y."/>
            <person name="Li H."/>
            <person name="Martin R."/>
            <person name="Mariuzza R.A."/>
        </authorList>
    </citation>
    <scope>X-RAY CRYSTALLOGRAPHY (1.9 ANGSTROMS) OF 30-219 OF HLA-DRA/HLA-DRB5 HETERODIMER IN COMPLEX WITH MBP PEPTIDE</scope>
    <scope>SUBUNIT</scope>
    <scope>DISULFIDE BONDS</scope>
</reference>
<reference key="33">
    <citation type="journal article" date="2001" name="Immunity">
        <title>Crystal structure of a superantigen bound to the high-affinity, zinc-dependent site on MHC class II.</title>
        <authorList>
            <person name="Li Y."/>
            <person name="Li H."/>
            <person name="Dimasi N."/>
            <person name="McCormick J.K."/>
            <person name="Martin R."/>
            <person name="Schuck P."/>
            <person name="Schlievert P.M."/>
            <person name="Mariuzza R.A."/>
        </authorList>
    </citation>
    <scope>X-RAY CRYSTALLOGRAPHY (3.2 ANGSTROMS) OF 30-219 OF HLA-DRA/HLA-DRB5 HETERODIMER IN COMPLEX WITH MPB PEPTIDE AND STREPTOCOCCUS PYOGENES SPEC PEPTIDE</scope>
    <scope>SUBUNIT</scope>
    <scope>DISULFIDE BONDS</scope>
</reference>
<reference evidence="21" key="34">
    <citation type="journal article" date="2002" name="Nat. Immunol.">
        <title>A functional and structural basis for TCR cross-reactivity in multiple sclerosis.</title>
        <authorList>
            <person name="Lang H.L.E."/>
            <person name="Jacobsen H."/>
            <person name="Ikemizu S."/>
            <person name="Andersson C."/>
            <person name="Harlos K."/>
            <person name="Madsen L."/>
            <person name="Hjorth P."/>
            <person name="Sondergaard L."/>
            <person name="Svejgaard A."/>
            <person name="Wucherpfennig K."/>
            <person name="Stuart D.I."/>
            <person name="Bell J.I."/>
            <person name="Jones E.Y."/>
            <person name="Fugger L."/>
        </authorList>
    </citation>
    <scope>X-RAY CRYSTALLOGRAPHY (3.1 ANGSTROMS) OF 30-219 OF HLA-DRA/HLA-DRB5 HETERODIMER IN COMPLEX EPSTEIN-BARR VIRUS BALF5 PEPTIDE</scope>
    <scope>SUBUNIT</scope>
    <scope>DISULFIDE BONDS</scope>
</reference>
<reference evidence="13" key="35">
    <citation type="journal article" date="2005" name="EMBO J.">
        <title>Structure of a human autoimmune TCR bound to a myelin basic protein self-peptide and a multiple sclerosis-associated MHC class II molecule.</title>
        <authorList>
            <person name="Li Y."/>
            <person name="Huang Y."/>
            <person name="Lue J."/>
            <person name="Quandt J.A."/>
            <person name="Martin R."/>
            <person name="Mariuzza R.A."/>
        </authorList>
    </citation>
    <scope>X-RAY CRYSTALLOGRAPHY (2.8 ANGSTROMS) OF 30-221 OF HLA-DRA/HLA-DRB5 HETERODIMER IN COMPLEX WITH MBP PEPTIDE AND TRAC</scope>
    <scope>SUBUNIT</scope>
    <scope>DISULFIDE BONDS</scope>
</reference>
<name>DRB5_HUMAN</name>
<gene>
    <name evidence="20" type="primary">HLA-DRB5</name>
</gene>
<dbReference type="EMBL" id="M20429">
    <property type="protein sequence ID" value="AAA59822.1"/>
    <property type="molecule type" value="mRNA"/>
</dbReference>
<dbReference type="EMBL" id="M35159">
    <property type="protein sequence ID" value="AAA59791.1"/>
    <property type="molecule type" value="Genomic_DNA"/>
</dbReference>
<dbReference type="EMBL" id="AL713966">
    <property type="protein sequence ID" value="CAI18079.1"/>
    <property type="molecule type" value="Genomic_DNA"/>
</dbReference>
<dbReference type="EMBL" id="AK314834">
    <property type="protein sequence ID" value="BAG37353.1"/>
    <property type="molecule type" value="mRNA"/>
</dbReference>
<dbReference type="EMBL" id="BC009234">
    <property type="protein sequence ID" value="AAH09234.1"/>
    <property type="molecule type" value="mRNA"/>
</dbReference>
<dbReference type="EMBL" id="U31770">
    <property type="protein sequence ID" value="AAB63983.1"/>
    <property type="molecule type" value="mRNA"/>
</dbReference>
<dbReference type="EMBL" id="U59685">
    <property type="protein sequence ID" value="AAB52229.1"/>
    <property type="molecule type" value="Genomic_DNA"/>
</dbReference>
<dbReference type="EMBL" id="M16954">
    <property type="protein sequence ID" value="AAA36276.1"/>
    <property type="molecule type" value="mRNA"/>
</dbReference>
<dbReference type="EMBL" id="M16955">
    <property type="protein sequence ID" value="AAA36277.1"/>
    <property type="molecule type" value="mRNA"/>
</dbReference>
<dbReference type="EMBL" id="M17377">
    <property type="protein sequence ID" value="AAA59818.1"/>
    <property type="molecule type" value="mRNA"/>
</dbReference>
<dbReference type="EMBL" id="X87210">
    <property type="status" value="NOT_ANNOTATED_CDS"/>
    <property type="molecule type" value="Genomic_DNA"/>
</dbReference>
<dbReference type="EMBL" id="FN430425">
    <property type="protein sequence ID" value="CAZ86696.1"/>
    <property type="molecule type" value="Genomic_DNA"/>
</dbReference>
<dbReference type="EMBL" id="Z83201">
    <property type="protein sequence ID" value="CAB05668.1"/>
    <property type="molecule type" value="Genomic_DNA"/>
</dbReference>
<dbReference type="EMBL" id="AF122887">
    <property type="protein sequence ID" value="AAD31766.1"/>
    <property type="molecule type" value="Genomic_DNA"/>
</dbReference>
<dbReference type="EMBL" id="AJ271159">
    <property type="protein sequence ID" value="CAB71144.1"/>
    <property type="molecule type" value="Genomic_DNA"/>
</dbReference>
<dbReference type="EMBL" id="AY141137">
    <property type="protein sequence ID" value="AAN28924.1"/>
    <property type="molecule type" value="Genomic_DNA"/>
</dbReference>
<dbReference type="EMBL" id="AJ427352">
    <property type="protein sequence ID" value="CAD20460.1"/>
    <property type="molecule type" value="Genomic_DNA"/>
</dbReference>
<dbReference type="EMBL" id="AY457037">
    <property type="protein sequence ID" value="AAR20446.2"/>
    <property type="molecule type" value="Genomic_DNA"/>
</dbReference>
<dbReference type="EMBL" id="Y09342">
    <property type="protein sequence ID" value="CAA70524.1"/>
    <property type="molecule type" value="Genomic_DNA"/>
</dbReference>
<dbReference type="EMBL" id="Y13727">
    <property type="protein sequence ID" value="CAA74055.1"/>
    <property type="molecule type" value="Genomic_DNA"/>
</dbReference>
<dbReference type="EMBL" id="M91001">
    <property type="status" value="NOT_ANNOTATED_CDS"/>
    <property type="molecule type" value="Genomic_DNA"/>
</dbReference>
<dbReference type="CCDS" id="CCDS4751.1"/>
<dbReference type="PIR" id="B27060">
    <property type="entry name" value="B27060"/>
</dbReference>
<dbReference type="PIR" id="B28043">
    <property type="entry name" value="B28043"/>
</dbReference>
<dbReference type="PIR" id="B28756">
    <property type="entry name" value="B28756"/>
</dbReference>
<dbReference type="PIR" id="C32526">
    <property type="entry name" value="C32526"/>
</dbReference>
<dbReference type="PIR" id="D25239">
    <property type="entry name" value="D25239"/>
</dbReference>
<dbReference type="PIR" id="I68733">
    <property type="entry name" value="I68733"/>
</dbReference>
<dbReference type="PIR" id="PT0169">
    <property type="entry name" value="PT0169"/>
</dbReference>
<dbReference type="PIR" id="PT0170">
    <property type="entry name" value="PT0170"/>
</dbReference>
<dbReference type="PIR" id="PT0171">
    <property type="entry name" value="PT0171"/>
</dbReference>
<dbReference type="RefSeq" id="NP_002116.2">
    <property type="nucleotide sequence ID" value="NM_002125.3"/>
</dbReference>
<dbReference type="PDB" id="1FV1">
    <property type="method" value="X-ray"/>
    <property type="resolution" value="1.90 A"/>
    <property type="chains" value="B/E=30-219"/>
</dbReference>
<dbReference type="PDB" id="1H15">
    <property type="method" value="X-ray"/>
    <property type="resolution" value="3.10 A"/>
    <property type="chains" value="B/E=30-219"/>
</dbReference>
<dbReference type="PDB" id="1HQR">
    <property type="method" value="X-ray"/>
    <property type="resolution" value="3.20 A"/>
    <property type="chains" value="B=30-219"/>
</dbReference>
<dbReference type="PDB" id="1ZGL">
    <property type="method" value="X-ray"/>
    <property type="resolution" value="2.80 A"/>
    <property type="chains" value="B/E/H/K=30-221"/>
</dbReference>
<dbReference type="PDBsum" id="1FV1"/>
<dbReference type="PDBsum" id="1H15"/>
<dbReference type="PDBsum" id="1HQR"/>
<dbReference type="PDBsum" id="1ZGL"/>
<dbReference type="SMR" id="Q30154"/>
<dbReference type="BioGRID" id="109372">
    <property type="interactions" value="39"/>
</dbReference>
<dbReference type="FunCoup" id="Q30154">
    <property type="interactions" value="440"/>
</dbReference>
<dbReference type="IntAct" id="Q30154">
    <property type="interactions" value="24"/>
</dbReference>
<dbReference type="MINT" id="Q30154"/>
<dbReference type="STRING" id="9606.ENSP00000364114"/>
<dbReference type="ChEMBL" id="CHEMBL3988561"/>
<dbReference type="DrugBank" id="DB05121">
    <property type="generic name" value="1D09C3"/>
</dbReference>
<dbReference type="DrugBank" id="DB11294">
    <property type="generic name" value="Coccidioides immitis spherule"/>
</dbReference>
<dbReference type="GlyConnect" id="1378">
    <property type="glycosylation" value="2 N-Linked glycans (1 site)"/>
</dbReference>
<dbReference type="GlyCosmos" id="Q30154">
    <property type="glycosylation" value="1 site, 2 glycans"/>
</dbReference>
<dbReference type="GlyGen" id="Q30154">
    <property type="glycosylation" value="1 site, 40 N-linked glycans (1 site)"/>
</dbReference>
<dbReference type="iPTMnet" id="Q30154"/>
<dbReference type="PhosphoSitePlus" id="Q30154"/>
<dbReference type="SwissPalm" id="Q30154"/>
<dbReference type="BioMuta" id="HLA-DRB5"/>
<dbReference type="DMDM" id="74754558"/>
<dbReference type="jPOST" id="Q30154"/>
<dbReference type="MassIVE" id="Q30154"/>
<dbReference type="PaxDb" id="9606-ENSP00000364114"/>
<dbReference type="PeptideAtlas" id="Q30154"/>
<dbReference type="ProteomicsDB" id="61556"/>
<dbReference type="Pumba" id="Q30154"/>
<dbReference type="Antibodypedia" id="13708">
    <property type="antibodies" value="207 antibodies from 23 providers"/>
</dbReference>
<dbReference type="DNASU" id="3127"/>
<dbReference type="Ensembl" id="ENST00000374975.4">
    <property type="protein sequence ID" value="ENSP00000364114.3"/>
    <property type="gene ID" value="ENSG00000198502.7"/>
</dbReference>
<dbReference type="GeneID" id="3127"/>
<dbReference type="KEGG" id="hsa:3127"/>
<dbReference type="MANE-Select" id="ENST00000374975.4">
    <property type="protein sequence ID" value="ENSP00000364114.3"/>
    <property type="RefSeq nucleotide sequence ID" value="NM_002125.4"/>
    <property type="RefSeq protein sequence ID" value="NP_002116.2"/>
</dbReference>
<dbReference type="UCSC" id="uc003obj.4">
    <property type="organism name" value="human"/>
</dbReference>
<dbReference type="AGR" id="HGNC:4953"/>
<dbReference type="CTD" id="3127"/>
<dbReference type="DisGeNET" id="3127"/>
<dbReference type="GeneCards" id="HLA-DRB5"/>
<dbReference type="HGNC" id="HGNC:4953">
    <property type="gene designation" value="HLA-DRB5"/>
</dbReference>
<dbReference type="HPA" id="ENSG00000198502">
    <property type="expression patterns" value="Tissue enhanced (lung, lymphoid tissue)"/>
</dbReference>
<dbReference type="MalaCards" id="HLA-DRB5"/>
<dbReference type="MIM" id="604776">
    <property type="type" value="gene"/>
</dbReference>
<dbReference type="neXtProt" id="NX_Q30154"/>
<dbReference type="OpenTargets" id="ENSG00000198502"/>
<dbReference type="PharmGKB" id="PA35076"/>
<dbReference type="VEuPathDB" id="HostDB:ENSG00000198502"/>
<dbReference type="eggNOG" id="ENOG502RYBQ">
    <property type="taxonomic scope" value="Eukaryota"/>
</dbReference>
<dbReference type="GeneTree" id="ENSGT00940000154993"/>
<dbReference type="HOGENOM" id="CLU_047501_13_1_1"/>
<dbReference type="InParanoid" id="Q30154"/>
<dbReference type="OMA" id="ANAFFGY"/>
<dbReference type="PAN-GO" id="Q30154">
    <property type="GO annotations" value="8 GO annotations based on evolutionary models"/>
</dbReference>
<dbReference type="PhylomeDB" id="Q30154"/>
<dbReference type="TreeFam" id="TF336626"/>
<dbReference type="PathwayCommons" id="Q30154"/>
<dbReference type="Reactome" id="R-HSA-202424">
    <property type="pathway name" value="Downstream TCR signaling"/>
</dbReference>
<dbReference type="Reactome" id="R-HSA-202427">
    <property type="pathway name" value="Phosphorylation of CD3 and TCR zeta chains"/>
</dbReference>
<dbReference type="Reactome" id="R-HSA-202430">
    <property type="pathway name" value="Translocation of ZAP-70 to Immunological synapse"/>
</dbReference>
<dbReference type="Reactome" id="R-HSA-202433">
    <property type="pathway name" value="Generation of second messenger molecules"/>
</dbReference>
<dbReference type="Reactome" id="R-HSA-2132295">
    <property type="pathway name" value="MHC class II antigen presentation"/>
</dbReference>
<dbReference type="Reactome" id="R-HSA-389948">
    <property type="pathway name" value="Co-inhibition by PD-1"/>
</dbReference>
<dbReference type="Reactome" id="R-HSA-877300">
    <property type="pathway name" value="Interferon gamma signaling"/>
</dbReference>
<dbReference type="SignaLink" id="Q30154"/>
<dbReference type="SIGNOR" id="Q30154"/>
<dbReference type="BioGRID-ORCS" id="3127">
    <property type="hits" value="11 hits in 1057 CRISPR screens"/>
</dbReference>
<dbReference type="ChiTaRS" id="HLA-DRB5">
    <property type="organism name" value="human"/>
</dbReference>
<dbReference type="EvolutionaryTrace" id="Q30154"/>
<dbReference type="GeneWiki" id="HLA-DRB5"/>
<dbReference type="GenomeRNAi" id="3127"/>
<dbReference type="Pharos" id="Q30154">
    <property type="development level" value="Tbio"/>
</dbReference>
<dbReference type="PRO" id="PR:Q30154"/>
<dbReference type="Proteomes" id="UP000005640">
    <property type="component" value="Chromosome 6"/>
</dbReference>
<dbReference type="RNAct" id="Q30154">
    <property type="molecule type" value="protein"/>
</dbReference>
<dbReference type="Bgee" id="ENSG00000198502">
    <property type="expression patterns" value="Expressed in granulocyte and 101 other cell types or tissues"/>
</dbReference>
<dbReference type="ExpressionAtlas" id="Q30154">
    <property type="expression patterns" value="baseline and differential"/>
</dbReference>
<dbReference type="GO" id="GO:0030669">
    <property type="term" value="C:clathrin-coated endocytic vesicle membrane"/>
    <property type="evidence" value="ECO:0000304"/>
    <property type="project" value="Reactome"/>
</dbReference>
<dbReference type="GO" id="GO:0030666">
    <property type="term" value="C:endocytic vesicle membrane"/>
    <property type="evidence" value="ECO:0000304"/>
    <property type="project" value="Reactome"/>
</dbReference>
<dbReference type="GO" id="GO:0012507">
    <property type="term" value="C:ER to Golgi transport vesicle membrane"/>
    <property type="evidence" value="ECO:0000304"/>
    <property type="project" value="Reactome"/>
</dbReference>
<dbReference type="GO" id="GO:0070062">
    <property type="term" value="C:extracellular exosome"/>
    <property type="evidence" value="ECO:0007005"/>
    <property type="project" value="UniProtKB"/>
</dbReference>
<dbReference type="GO" id="GO:0000139">
    <property type="term" value="C:Golgi membrane"/>
    <property type="evidence" value="ECO:0000304"/>
    <property type="project" value="Reactome"/>
</dbReference>
<dbReference type="GO" id="GO:0031902">
    <property type="term" value="C:late endosome membrane"/>
    <property type="evidence" value="ECO:0000314"/>
    <property type="project" value="UniProtKB"/>
</dbReference>
<dbReference type="GO" id="GO:0098553">
    <property type="term" value="C:lumenal side of endoplasmic reticulum membrane"/>
    <property type="evidence" value="ECO:0000304"/>
    <property type="project" value="Reactome"/>
</dbReference>
<dbReference type="GO" id="GO:0005765">
    <property type="term" value="C:lysosomal membrane"/>
    <property type="evidence" value="ECO:0000314"/>
    <property type="project" value="UniProtKB"/>
</dbReference>
<dbReference type="GO" id="GO:0042613">
    <property type="term" value="C:MHC class II protein complex"/>
    <property type="evidence" value="ECO:0000250"/>
    <property type="project" value="CAFA"/>
</dbReference>
<dbReference type="GO" id="GO:0005886">
    <property type="term" value="C:plasma membrane"/>
    <property type="evidence" value="ECO:0000304"/>
    <property type="project" value="Reactome"/>
</dbReference>
<dbReference type="GO" id="GO:0032588">
    <property type="term" value="C:trans-Golgi network membrane"/>
    <property type="evidence" value="ECO:0000304"/>
    <property type="project" value="Reactome"/>
</dbReference>
<dbReference type="GO" id="GO:0030658">
    <property type="term" value="C:transport vesicle membrane"/>
    <property type="evidence" value="ECO:0000304"/>
    <property type="project" value="Reactome"/>
</dbReference>
<dbReference type="GO" id="GO:0023026">
    <property type="term" value="F:MHC class II protein complex binding"/>
    <property type="evidence" value="ECO:0000318"/>
    <property type="project" value="GO_Central"/>
</dbReference>
<dbReference type="GO" id="GO:0042605">
    <property type="term" value="F:peptide antigen binding"/>
    <property type="evidence" value="ECO:0000250"/>
    <property type="project" value="CAFA"/>
</dbReference>
<dbReference type="GO" id="GO:0002250">
    <property type="term" value="P:adaptive immune response"/>
    <property type="evidence" value="ECO:0007669"/>
    <property type="project" value="UniProtKB-KW"/>
</dbReference>
<dbReference type="GO" id="GO:0019886">
    <property type="term" value="P:antigen processing and presentation of exogenous peptide antigen via MHC class II"/>
    <property type="evidence" value="ECO:0000318"/>
    <property type="project" value="GO_Central"/>
</dbReference>
<dbReference type="GO" id="GO:0002503">
    <property type="term" value="P:peptide antigen assembly with MHC class II protein complex"/>
    <property type="evidence" value="ECO:0000318"/>
    <property type="project" value="GO_Central"/>
</dbReference>
<dbReference type="GO" id="GO:0050778">
    <property type="term" value="P:positive regulation of immune response"/>
    <property type="evidence" value="ECO:0000318"/>
    <property type="project" value="GO_Central"/>
</dbReference>
<dbReference type="GO" id="GO:0050870">
    <property type="term" value="P:positive regulation of T cell activation"/>
    <property type="evidence" value="ECO:0000318"/>
    <property type="project" value="GO_Central"/>
</dbReference>
<dbReference type="CDD" id="cd21000">
    <property type="entry name" value="IgC1_MHC_II_beta_HLA-DR"/>
    <property type="match status" value="1"/>
</dbReference>
<dbReference type="FunFam" id="2.60.40.10:FF:000116">
    <property type="entry name" value="HLA class II histocompatibility antigen, DRB1-1 beta chain"/>
    <property type="match status" value="1"/>
</dbReference>
<dbReference type="FunFam" id="3.10.320.10:FF:000001">
    <property type="entry name" value="HLA class II histocompatibility antigen, DRB1-1 beta chain"/>
    <property type="match status" value="1"/>
</dbReference>
<dbReference type="Gene3D" id="3.10.320.10">
    <property type="entry name" value="Class II Histocompatibility Antigen, M Beta Chain, Chain B, domain 1"/>
    <property type="match status" value="1"/>
</dbReference>
<dbReference type="Gene3D" id="2.60.40.10">
    <property type="entry name" value="Immunoglobulins"/>
    <property type="match status" value="1"/>
</dbReference>
<dbReference type="InterPro" id="IPR007110">
    <property type="entry name" value="Ig-like_dom"/>
</dbReference>
<dbReference type="InterPro" id="IPR036179">
    <property type="entry name" value="Ig-like_dom_sf"/>
</dbReference>
<dbReference type="InterPro" id="IPR013783">
    <property type="entry name" value="Ig-like_fold"/>
</dbReference>
<dbReference type="InterPro" id="IPR003006">
    <property type="entry name" value="Ig/MHC_CS"/>
</dbReference>
<dbReference type="InterPro" id="IPR003597">
    <property type="entry name" value="Ig_C1-set"/>
</dbReference>
<dbReference type="InterPro" id="IPR050160">
    <property type="entry name" value="MHC/Immunoglobulin"/>
</dbReference>
<dbReference type="InterPro" id="IPR011162">
    <property type="entry name" value="MHC_I/II-like_Ag-recog"/>
</dbReference>
<dbReference type="InterPro" id="IPR014745">
    <property type="entry name" value="MHC_II_a/b_N"/>
</dbReference>
<dbReference type="InterPro" id="IPR000353">
    <property type="entry name" value="MHC_II_b_N"/>
</dbReference>
<dbReference type="PANTHER" id="PTHR19944:SF97">
    <property type="entry name" value="HLA CLASS II HISTOCOMPATIBILITY ANTIGEN, DR BETA 5 CHAIN"/>
    <property type="match status" value="1"/>
</dbReference>
<dbReference type="PANTHER" id="PTHR19944">
    <property type="entry name" value="MHC CLASS II-RELATED"/>
    <property type="match status" value="1"/>
</dbReference>
<dbReference type="Pfam" id="PF07654">
    <property type="entry name" value="C1-set"/>
    <property type="match status" value="1"/>
</dbReference>
<dbReference type="Pfam" id="PF00969">
    <property type="entry name" value="MHC_II_beta"/>
    <property type="match status" value="1"/>
</dbReference>
<dbReference type="SMART" id="SM00407">
    <property type="entry name" value="IGc1"/>
    <property type="match status" value="1"/>
</dbReference>
<dbReference type="SMART" id="SM00921">
    <property type="entry name" value="MHC_II_beta"/>
    <property type="match status" value="1"/>
</dbReference>
<dbReference type="SUPFAM" id="SSF48726">
    <property type="entry name" value="Immunoglobulin"/>
    <property type="match status" value="1"/>
</dbReference>
<dbReference type="SUPFAM" id="SSF54452">
    <property type="entry name" value="MHC antigen-recognition domain"/>
    <property type="match status" value="1"/>
</dbReference>
<dbReference type="PROSITE" id="PS50835">
    <property type="entry name" value="IG_LIKE"/>
    <property type="match status" value="1"/>
</dbReference>
<dbReference type="PROSITE" id="PS00290">
    <property type="entry name" value="IG_MHC"/>
    <property type="match status" value="1"/>
</dbReference>
<protein>
    <recommendedName>
        <fullName>HLA class II histocompatibility antigen, DR beta 5 chain</fullName>
    </recommendedName>
    <alternativeName>
        <fullName>DR beta-5</fullName>
    </alternativeName>
    <alternativeName>
        <fullName>DR2-beta-2</fullName>
    </alternativeName>
    <alternativeName>
        <fullName>Dw2</fullName>
    </alternativeName>
    <alternativeName>
        <fullName>MHC class II antigen DRB5</fullName>
    </alternativeName>
</protein>
<feature type="signal peptide" evidence="12">
    <location>
        <begin position="1"/>
        <end position="29"/>
    </location>
</feature>
<feature type="chain" id="PRO_5000143106" description="HLA class II histocompatibility antigen, DR beta 5 chain">
    <location>
        <begin position="30"/>
        <end position="266"/>
    </location>
</feature>
<feature type="topological domain" description="Extracellular" evidence="1">
    <location>
        <begin position="30"/>
        <end position="227"/>
    </location>
</feature>
<feature type="transmembrane region" description="Helical" evidence="1">
    <location>
        <begin position="228"/>
        <end position="248"/>
    </location>
</feature>
<feature type="topological domain" description="Cytoplasmic" evidence="1">
    <location>
        <begin position="249"/>
        <end position="266"/>
    </location>
</feature>
<feature type="domain" description="Ig-like C1-type" evidence="1">
    <location>
        <begin position="126"/>
        <end position="214"/>
    </location>
</feature>
<feature type="region of interest" description="Beta-1" evidence="1">
    <location>
        <begin position="30"/>
        <end position="124"/>
    </location>
</feature>
<feature type="region of interest" description="Beta-2" evidence="1">
    <location>
        <begin position="125"/>
        <end position="227"/>
    </location>
</feature>
<feature type="glycosylation site" description="N-linked (GlcNAc...) asparagine" evidence="7">
    <location>
        <position position="48"/>
    </location>
</feature>
<feature type="disulfide bond">
    <location>
        <begin position="44"/>
        <end position="108"/>
    </location>
</feature>
<feature type="disulfide bond">
    <location>
        <begin position="146"/>
        <end position="202"/>
    </location>
</feature>
<feature type="sequence variant" id="VAR_060951" description="In dbSNP:rs1064587.">
    <original>K</original>
    <variation>M</variation>
    <location>
        <position position="14"/>
    </location>
</feature>
<feature type="sequence variant" id="VAR_060952" description="In dbSNP:rs701884.">
    <original>K</original>
    <variation>Q</variation>
    <location>
        <position position="14"/>
    </location>
</feature>
<feature type="sequence variant" id="VAR_060953" description="In allele DRB5*02:02; requires 2 nucleotide substitutions.">
    <original>K</original>
    <variation>V</variation>
    <location>
        <position position="14"/>
    </location>
</feature>
<feature type="sequence variant" id="VAR_050355" description="In dbSNP:rs17211043.">
    <original>M</original>
    <variation>T</variation>
    <location>
        <position position="20"/>
    </location>
</feature>
<feature type="sequence variant" id="VAR_039871" evidence="8 9 11">
    <original>L</original>
    <variation>S</variation>
    <location>
        <position position="28"/>
    </location>
</feature>
<feature type="sequence variant" id="VAR_050356" description="In dbSNP:rs1141741.">
    <original>R</original>
    <variation>Q</variation>
    <location>
        <position position="33"/>
    </location>
</feature>
<feature type="sequence variant" id="VAR_060954" description="In allele DRB5*02:02, allele DRB5*02:04 and allele DRB5*02:05; dbSNP:rs1136744.">
    <original>R</original>
    <variation>C</variation>
    <location>
        <position position="35"/>
    </location>
</feature>
<feature type="sequence variant" id="VAR_050357" description="In dbSNP:rs200581589.">
    <original>K</original>
    <variation>T</variation>
    <location>
        <position position="41"/>
    </location>
</feature>
<feature type="sequence variant" id="VAR_060955" description="In dbSNP:rs202185589.">
    <original>H</original>
    <variation>Q</variation>
    <location>
        <position position="57"/>
    </location>
</feature>
<feature type="sequence variant" id="VAR_060956" description="In allele DRB5*01:02, allele DRB5*01:03, allele DRB5*02:02, allele DRB5*02:03, allele DRB5*02:04 and allele DRB5*02:05; dbSNP:rs41546317.">
    <original>D</original>
    <variation>G</variation>
    <location>
        <position position="59"/>
    </location>
</feature>
<feature type="sequence variant" id="VAR_050358" description="In dbSNP:rs1059576.">
    <original>N</original>
    <variation>H</variation>
    <location>
        <position position="62"/>
    </location>
</feature>
<feature type="sequence variant" id="VAR_060958" description="In allele DRB5*01:02, allele DRB5*01:03, allele DRB5*02:02, allele DRB5*02:03, allele DRB5*02:04 and allele DRB5*02:05; dbSNP:rs707956.">
    <original>D</original>
    <variation>N</variation>
    <location>
        <position position="66"/>
    </location>
</feature>
<feature type="sequence variant" id="VAR_060959" description="In allele DRB5*01:14; dbSNP:rs707956.">
    <original>D</original>
    <variation>Y</variation>
    <location>
        <position position="66"/>
    </location>
</feature>
<feature type="sequence variant" id="VAR_060960" description="In allele DRB5*01:02, allele DRB5*01:03, allele DRB5*01:05, allele DRB5*01:14, allele DRB5*02:02, allele DRB5*02:03, allele DRB5*02:04 and allele DRB5*02:05; dbSNP:rs1059580.">
    <original>L</original>
    <variation>V</variation>
    <location>
        <position position="67"/>
    </location>
</feature>
<feature type="sequence variant" id="VAR_060961" description="In allele DRB5*01:13.">
    <original>A</original>
    <variation>E</variation>
    <location>
        <position position="87"/>
    </location>
</feature>
<feature type="sequence variant" id="VAR_060962" description="In allele DRB5*01:12; dbSNP:rs41541218.">
    <original>Y</original>
    <variation>S</variation>
    <location>
        <position position="89"/>
    </location>
</feature>
<feature type="sequence variant" id="VAR_060964" description="In allele DRB5*01:06, allele DRB5*01:07, allele DRB5*01:11, allele DRB5*02:02 and allele DRB5*02:03; dbSNP:rs696318.">
    <original>F</original>
    <variation>I</variation>
    <location>
        <position position="96"/>
    </location>
</feature>
<feature type="sequence variant" id="VAR_060963" description="In allele DRB5*02:05; dbSNP:rs696318.">
    <original>F</original>
    <variation>L</variation>
    <location>
        <position position="96"/>
    </location>
</feature>
<feature type="sequence variant" id="VAR_060965" description="In dbSNP:rs41559913.">
    <original>D</original>
    <variation>E</variation>
    <location>
        <position position="99"/>
    </location>
</feature>
<feature type="sequence variant" id="VAR_060966" description="In dbSNP:rs41545413.">
    <original>D</original>
    <variation>G</variation>
    <location>
        <position position="99"/>
    </location>
</feature>
<feature type="sequence variant" id="VAR_060967" description="In dbSNP:rs41547217.">
    <original>D</original>
    <variation>H</variation>
    <location>
        <position position="99"/>
    </location>
</feature>
<feature type="sequence variant" id="VAR_060968" description="In allele DRB5*01:09; dbSNP:rs41547217.">
    <original>D</original>
    <variation>N</variation>
    <location>
        <position position="99"/>
    </location>
</feature>
<feature type="sequence variant" id="VAR_060969" description="In allele DRB5*01:06, allele DRB5*01:11, allele DRB5*02:02, allele DRB5*02:03, allele DRB5*02:04 and allele DRB5*02:05; requires 2 nucleotide substitutions.">
    <original>D</original>
    <variation>Q</variation>
    <location>
        <position position="99"/>
    </location>
</feature>
<feature type="sequence variant" id="VAR_060970" description="In allele DRB5*01:12; requires 2 nucleotide substitutions.">
    <original>D</original>
    <variation>R</variation>
    <location>
        <position position="99"/>
    </location>
</feature>
<feature type="sequence variant" id="VAR_060971" description="In allele DRB5*01:06, allele DRB5*01:11, allele DRB5*02:02, allele DRB5*02:03 and allele DRB5*02:04; requires 2 nucleotide substitutions.">
    <original>R</original>
    <variation>A</variation>
    <location>
        <position position="100"/>
    </location>
</feature>
<feature type="sequence variant" id="VAR_060972" description="In dbSNP:rs41551116.">
    <original>R</original>
    <variation>G</variation>
    <location>
        <position position="100"/>
    </location>
</feature>
<feature type="sequence variant" id="VAR_060973" description="In allele DRB5*01:03; dbSNP:rs41544215.">
    <original>R</original>
    <variation>T</variation>
    <location>
        <position position="100"/>
    </location>
</feature>
<feature type="sequence variant" id="VAR_060974" description="In allele DRB5*01:12; dbSNP:rs1059598.">
    <original>A</original>
    <variation>E</variation>
    <location>
        <position position="103"/>
    </location>
</feature>
<feature type="sequence variant" id="VAR_060975" description="In allele DRB5*01:04; requires 2 nucleotide substitutions.">
    <original>A</original>
    <variation>L</variation>
    <location>
        <position position="103"/>
    </location>
</feature>
<feature type="sequence variant" id="VAR_050359" description="In dbSNP:rs115817940.">
    <original>T</original>
    <variation>N</variation>
    <location>
        <position position="106"/>
    </location>
</feature>
<feature type="sequence variant" id="VAR_060976" description="In allele DRB5*01:12; requires 2 nucleotide substitutions.">
    <original>Y</original>
    <variation>V</variation>
    <location>
        <position position="107"/>
    </location>
</feature>
<feature type="sequence variant" id="VAR_060977" description="In allele DRB5*01:06, allele DRB5*02:02, allele DRB5*02:04 and allele DRB5*02:05; dbSNP:rs1136778.">
    <original>V</original>
    <variation>A</variation>
    <location>
        <position position="114"/>
    </location>
</feature>
<feature type="sequence variant" id="VAR_060978" description="In allele DRB5*01:06, allele DRB5*02:02, allele DRB5*02:04 and allele DRB5*02:05; dbSNP:rs41556512.">
    <original>G</original>
    <variation>V</variation>
    <location>
        <position position="115"/>
    </location>
</feature>
<feature type="sequence variant" id="VAR_039872" description="In dbSNP:rs113395425." evidence="9 10">
    <original>G</original>
    <variation>A</variation>
    <location>
        <position position="154"/>
    </location>
</feature>
<feature type="sequence variant" id="VAR_060979" description="In allele DRB5*02:02; dbSNP:rs1059633.">
    <original>S</original>
    <variation>G</variation>
    <location>
        <position position="164"/>
    </location>
</feature>
<feature type="sequence variant" id="VAR_060980" description="In allele DRB5*02:02; dbSNP:rs41559420.">
    <original>T</original>
    <variation>I</variation>
    <location>
        <position position="186"/>
    </location>
</feature>
<feature type="sequence variant" id="VAR_060981" description="In allele DRB5*02:02; dbSNP:rs41553512.">
    <original>V</original>
    <variation>I</variation>
    <location>
        <position position="232"/>
    </location>
</feature>
<feature type="sequence conflict" description="In Ref. 11; AA sequence." evidence="13" ref="11">
    <original>Q</original>
    <variation>E</variation>
    <location>
        <position position="139"/>
    </location>
</feature>
<feature type="strand" evidence="25">
    <location>
        <begin position="36"/>
        <end position="47"/>
    </location>
</feature>
<feature type="turn" evidence="25">
    <location>
        <begin position="48"/>
        <end position="51"/>
    </location>
</feature>
<feature type="strand" evidence="25">
    <location>
        <begin position="52"/>
        <end position="61"/>
    </location>
</feature>
<feature type="strand" evidence="25">
    <location>
        <begin position="64"/>
        <end position="70"/>
    </location>
</feature>
<feature type="turn" evidence="25">
    <location>
        <begin position="71"/>
        <end position="73"/>
    </location>
</feature>
<feature type="strand" evidence="25">
    <location>
        <begin position="75"/>
        <end position="80"/>
    </location>
</feature>
<feature type="helix" evidence="25">
    <location>
        <begin position="81"/>
        <end position="83"/>
    </location>
</feature>
<feature type="helix" evidence="25">
    <location>
        <begin position="84"/>
        <end position="91"/>
    </location>
</feature>
<feature type="helix" evidence="25">
    <location>
        <begin position="94"/>
        <end position="101"/>
    </location>
</feature>
<feature type="helix" evidence="25">
    <location>
        <begin position="103"/>
        <end position="106"/>
    </location>
</feature>
<feature type="helix" evidence="25">
    <location>
        <begin position="108"/>
        <end position="115"/>
    </location>
</feature>
<feature type="helix" evidence="25">
    <location>
        <begin position="116"/>
        <end position="118"/>
    </location>
</feature>
<feature type="turn" evidence="25">
    <location>
        <begin position="119"/>
        <end position="121"/>
    </location>
</feature>
<feature type="strand" evidence="25">
    <location>
        <begin position="127"/>
        <end position="132"/>
    </location>
</feature>
<feature type="strand" evidence="25">
    <location>
        <begin position="137"/>
        <end position="154"/>
    </location>
</feature>
<feature type="strand" evidence="25">
    <location>
        <begin position="157"/>
        <end position="166"/>
    </location>
</feature>
<feature type="strand" evidence="25">
    <location>
        <begin position="169"/>
        <end position="173"/>
    </location>
</feature>
<feature type="strand" evidence="25">
    <location>
        <begin position="180"/>
        <end position="182"/>
    </location>
</feature>
<feature type="strand" evidence="25">
    <location>
        <begin position="184"/>
        <end position="192"/>
    </location>
</feature>
<feature type="strand" evidence="25">
    <location>
        <begin position="199"/>
        <end position="205"/>
    </location>
</feature>
<feature type="strand" evidence="25">
    <location>
        <begin position="213"/>
        <end position="218"/>
    </location>
</feature>
<comment type="function">
    <text>Binds peptides derived from antigens that access the endocytic route of antigen presenting cells (APC) and presents them on the cell surface for recognition by the CD4 T-cells. The peptide binding cleft accommodates peptides of 10-30 residues. The peptides presented by MHC class II molecules are generated mostly by degradation of proteins that access the endocytic route, where they are processed by lysosomal proteases and other hydrolases. Exogenous antigens that have been endocytosed by the APC are thus readily available for presentation via MHC II molecules, and for this reason this antigen presentation pathway is usually referred to as exogenous. As membrane proteins on their way to degradation in lysosomes as part of their normal turn-over are also contained in the endosomal/lysosomal compartments, exogenous antigens must compete with those derived from endogenous components. Autophagy is also a source of endogenous peptides, autophagosomes constitutively fuse with MHC class II loading compartments. In addition to APCs, other cells of the gastrointestinal tract, such as epithelial cells, express MHC class II molecules and CD74 and act as APCs, which is an unusual trait of the GI tract. To produce a MHC class II molecule that presents an antigen, three MHC class II molecules (heterodimers of an alpha and a beta chain) associate with a CD74 trimer in the ER to form a heterononamer. Soon after the entry of this complex into the endosomal/lysosomal system where antigen processing occurs, CD74 undergoes a sequential degradation by various proteases, including CTSS and CTSL, leaving a small fragment termed CLIP (class-II-associated invariant chain peptide). The removal of CLIP is facilitated by HLA-DM via direct binding to the alpha-beta-CLIP complex so that CLIP is released. HLA-DM stabilizes MHC class II molecules until primary high affinity antigenic peptides are bound. The MHC II molecule bound to a peptide is then transported to the cell membrane surface. In B-cells, the interaction between HLA-DM and MHC class II molecules is regulated by HLA-DO. Primary dendritic cells (DCs) also to express HLA-DO. Lysosomal microenvironment has been implicated in the regulation of antigen loading into MHC II molecules, increased acidification produces increased proteolysis and efficient peptide loading.</text>
</comment>
<comment type="subunit">
    <text evidence="2 3 4 5">Heterodimer of an alpha and a beta subunit; also referred as MHC class II molecule. In the endoplasmic reticulum (ER) it forms a heterononamer; 3 MHC class II molecules bind to a CD74 homotrimer (also known as invariant chain or HLA class II histocompatibility antigen gamma chain). In the endosomal/lysosomal system; CD74 undergoes sequential degradation by various proteases; leaving a small fragment termed CLIP on each MHC class II molecule. MHC class II molecule interacts with HLA_DM, and HLA_DO in B-cells, in order to release CLIP and facilitate the binding of antigenic peptides.</text>
</comment>
<comment type="interaction">
    <interactant intactId="EBI-2798348">
        <id>Q30154</id>
    </interactant>
    <interactant intactId="EBI-974488">
        <id>O14757</id>
        <label>CHEK1</label>
    </interactant>
    <organismsDiffer>false</organismsDiffer>
    <experiments>2</experiments>
</comment>
<comment type="subcellular location">
    <subcellularLocation>
        <location evidence="6">Cell membrane</location>
        <topology evidence="6 13">Single-pass type I membrane protein</topology>
    </subcellularLocation>
    <subcellularLocation>
        <location evidence="6">Endoplasmic reticulum membrane</location>
        <topology evidence="6 13">Single-pass type I membrane protein</topology>
    </subcellularLocation>
    <subcellularLocation>
        <location evidence="6">Golgi apparatus</location>
        <location evidence="6">trans-Golgi network membrane</location>
        <topology evidence="6 13">Single-pass type I membrane protein</topology>
    </subcellularLocation>
    <subcellularLocation>
        <location evidence="6">Endosome membrane</location>
        <topology evidence="6 13">Single-pass type I membrane protein</topology>
    </subcellularLocation>
    <subcellularLocation>
        <location evidence="6">Lysosome membrane</location>
        <topology evidence="6 13">Single-pass type I membrane protein</topology>
    </subcellularLocation>
    <subcellularLocation>
        <location evidence="6">Late endosome membrane</location>
        <topology evidence="6 13">Single-pass type I membrane protein</topology>
    </subcellularLocation>
    <text>The MHC class II complex transits through a number of intracellular compartments in the endocytic pathway until it reaches the cell membrane for antigen presentation.</text>
</comment>
<comment type="PTM">
    <text evidence="14">Ubiquitinated by MARCH1 and MARCH8 at Lys-254 leading to down-regulation of MHC class II.</text>
</comment>
<comment type="polymorphism">
    <text>The following alleles of DRB5 are known: DRB5*01:01, DRB5*01:02, DRB5*01:03, DRB5*01:04, DRB5*01:05, DRB5*01:06, DRB5*01:07, DRB5*01:09, DRB5*01:11, DRB5*01:12 DRB5*01:13, DRB5*01:14, DRB5*02:02, DRB5*02:03, DRB5*02:04, DRB5*02:05. The sequence shown is that of DRB5*01:01.</text>
</comment>
<comment type="similarity">
    <text evidence="1">Belongs to the MHC class II family.</text>
</comment>
<comment type="caution">
    <text evidence="13">HLA-DRB3, HLA-DRB4 and HLA-DRB5 may represent a unique gene.</text>
</comment>
<keyword id="KW-0002">3D-structure</keyword>
<keyword id="KW-1064">Adaptive immunity</keyword>
<keyword id="KW-1003">Cell membrane</keyword>
<keyword id="KW-0903">Direct protein sequencing</keyword>
<keyword id="KW-1015">Disulfide bond</keyword>
<keyword id="KW-0256">Endoplasmic reticulum</keyword>
<keyword id="KW-0967">Endosome</keyword>
<keyword id="KW-0325">Glycoprotein</keyword>
<keyword id="KW-0333">Golgi apparatus</keyword>
<keyword id="KW-0391">Immunity</keyword>
<keyword id="KW-0458">Lysosome</keyword>
<keyword id="KW-0472">Membrane</keyword>
<keyword id="KW-0491">MHC II</keyword>
<keyword id="KW-1267">Proteomics identification</keyword>
<keyword id="KW-1185">Reference proteome</keyword>
<keyword id="KW-0732">Signal</keyword>
<keyword id="KW-0812">Transmembrane</keyword>
<keyword id="KW-1133">Transmembrane helix</keyword>
<keyword id="KW-0832">Ubl conjugation</keyword>
<sequence length="266" mass="30056">MVCLKLPGGSYMAKLTVTLMVLSSPLALAGDTRPRFLQQDKYECHFFNGTERVRFLHRDIYNQEEDLRFDSDVGEYRAVTELGRPDAEYWNSQKDFLEDRRAAVDTYCRHNYGVGESFTVQRRVEPKVTVYPARTQTLQHHNLLVCSVNGFYPGSIEVRWFRNSQEEKAGVVSTGLIQNGDWTFQTLVMLETVPRSGEVYTCQVEHPSVTSPLTVEWRAQSESAQSKMLSGVGGFVLGLLFLGAGLFIYFKNQKGHSGLHPTGLVS</sequence>